<name>SPXN3_HUMAN</name>
<keyword id="KW-1267">Proteomics identification</keyword>
<keyword id="KW-1185">Reference proteome</keyword>
<protein>
    <recommendedName>
        <fullName>Sperm protein associated with the nucleus on the X chromosome N3</fullName>
    </recommendedName>
    <alternativeName>
        <fullName>Nuclear-associated protein SPAN-Xn3</fullName>
        <shortName>SPANX-N3</shortName>
    </alternativeName>
    <alternativeName>
        <fullName>SPANX family member N3</fullName>
    </alternativeName>
</protein>
<gene>
    <name type="primary">SPANXN3</name>
</gene>
<feature type="chain" id="PRO_0000285540" description="Sperm protein associated with the nucleus on the X chromosome N3">
    <location>
        <begin position="1"/>
        <end position="141"/>
    </location>
</feature>
<feature type="region of interest" description="Disordered" evidence="1">
    <location>
        <begin position="1"/>
        <end position="47"/>
    </location>
</feature>
<feature type="region of interest" description="Disordered" evidence="1">
    <location>
        <begin position="66"/>
        <end position="141"/>
    </location>
</feature>
<feature type="compositionally biased region" description="Polar residues" evidence="1">
    <location>
        <begin position="1"/>
        <end position="10"/>
    </location>
</feature>
<feature type="compositionally biased region" description="Basic and acidic residues" evidence="1">
    <location>
        <begin position="11"/>
        <end position="26"/>
    </location>
</feature>
<feature type="compositionally biased region" description="Polar residues" evidence="1">
    <location>
        <begin position="66"/>
        <end position="80"/>
    </location>
</feature>
<feature type="compositionally biased region" description="Acidic residues" evidence="1">
    <location>
        <begin position="84"/>
        <end position="103"/>
    </location>
</feature>
<feature type="compositionally biased region" description="Polar residues" evidence="1">
    <location>
        <begin position="132"/>
        <end position="141"/>
    </location>
</feature>
<feature type="sequence variant" id="VAR_032026" description="In dbSNP:rs6654212." evidence="2 3 4">
    <original>N</original>
    <variation>K</variation>
    <location>
        <position position="43"/>
    </location>
</feature>
<feature type="sequence variant" id="VAR_053684" description="In dbSNP:rs5953851.">
    <original>V</original>
    <variation>I</variation>
    <location>
        <position position="89"/>
    </location>
</feature>
<accession>Q5MJ09</accession>
<accession>Q0ZNK4</accession>
<proteinExistence type="evidence at protein level"/>
<evidence type="ECO:0000256" key="1">
    <source>
        <dbReference type="SAM" id="MobiDB-lite"/>
    </source>
</evidence>
<evidence type="ECO:0000269" key="2">
    <source>
    </source>
</evidence>
<evidence type="ECO:0000269" key="3">
    <source>
    </source>
</evidence>
<evidence type="ECO:0000269" key="4">
    <source>
    </source>
</evidence>
<evidence type="ECO:0000305" key="5"/>
<sequence>MEQPTSSTNGEKTKSPCESNNKKNDEMQEVPNRVLAPEQSLKNTKTSEYPIIFVYYLRKGKKINSNQLENEQSQENSINPIQKEEDEGVDLSEGSSNEDEDLGPCEGPSKEDKDLDSSEGSSQEDEDLGLSEGSSQDSGED</sequence>
<dbReference type="EMBL" id="AY825031">
    <property type="protein sequence ID" value="AAV97587.1"/>
    <property type="molecule type" value="Genomic_DNA"/>
</dbReference>
<dbReference type="EMBL" id="DQ336128">
    <property type="protein sequence ID" value="ABC61879.1"/>
    <property type="molecule type" value="mRNA"/>
</dbReference>
<dbReference type="EMBL" id="DQ336129">
    <property type="protein sequence ID" value="ABC61880.1"/>
    <property type="molecule type" value="mRNA"/>
</dbReference>
<dbReference type="EMBL" id="AC239395">
    <property type="status" value="NOT_ANNOTATED_CDS"/>
    <property type="molecule type" value="Genomic_DNA"/>
</dbReference>
<dbReference type="EMBL" id="AL030997">
    <property type="protein sequence ID" value="CAI42274.1"/>
    <property type="molecule type" value="Genomic_DNA"/>
</dbReference>
<dbReference type="EMBL" id="AL080239">
    <property type="protein sequence ID" value="CAI42274.1"/>
    <property type="status" value="JOINED"/>
    <property type="molecule type" value="Genomic_DNA"/>
</dbReference>
<dbReference type="EMBL" id="AL080239">
    <property type="protein sequence ID" value="CAI41648.1"/>
    <property type="molecule type" value="Genomic_DNA"/>
</dbReference>
<dbReference type="EMBL" id="AL030997">
    <property type="protein sequence ID" value="CAI41648.1"/>
    <property type="status" value="JOINED"/>
    <property type="molecule type" value="Genomic_DNA"/>
</dbReference>
<dbReference type="EMBL" id="BC062750">
    <property type="protein sequence ID" value="AAH62750.1"/>
    <property type="molecule type" value="mRNA"/>
</dbReference>
<dbReference type="CCDS" id="CCDS35418.1"/>
<dbReference type="RefSeq" id="NP_001009609.2">
    <property type="nucleotide sequence ID" value="NM_001009609.4"/>
</dbReference>
<dbReference type="BioGRID" id="126541">
    <property type="interactions" value="28"/>
</dbReference>
<dbReference type="FunCoup" id="Q5MJ09">
    <property type="interactions" value="6"/>
</dbReference>
<dbReference type="IntAct" id="Q5MJ09">
    <property type="interactions" value="24"/>
</dbReference>
<dbReference type="STRING" id="9606.ENSP00000359534"/>
<dbReference type="GlyGen" id="Q5MJ09">
    <property type="glycosylation" value="1 site, 1 O-linked glycan (1 site)"/>
</dbReference>
<dbReference type="iPTMnet" id="Q5MJ09"/>
<dbReference type="PhosphoSitePlus" id="Q5MJ09"/>
<dbReference type="BioMuta" id="SPANXN3"/>
<dbReference type="DMDM" id="74743051"/>
<dbReference type="MassIVE" id="Q5MJ09"/>
<dbReference type="PaxDb" id="9606-ENSP00000359534"/>
<dbReference type="PeptideAtlas" id="Q5MJ09"/>
<dbReference type="ProteomicsDB" id="63581"/>
<dbReference type="Antibodypedia" id="56629">
    <property type="antibodies" value="64 antibodies from 11 providers"/>
</dbReference>
<dbReference type="DNASU" id="139067"/>
<dbReference type="Ensembl" id="ENST00000370503.2">
    <property type="protein sequence ID" value="ENSP00000359534.2"/>
    <property type="gene ID" value="ENSG00000189252.4"/>
</dbReference>
<dbReference type="GeneID" id="139067"/>
<dbReference type="KEGG" id="hsa:139067"/>
<dbReference type="MANE-Select" id="ENST00000370503.2">
    <property type="protein sequence ID" value="ENSP00000359534.2"/>
    <property type="RefSeq nucleotide sequence ID" value="NM_001009609.4"/>
    <property type="RefSeq protein sequence ID" value="NP_001009609.2"/>
</dbReference>
<dbReference type="UCSC" id="uc004fbw.4">
    <property type="organism name" value="human"/>
</dbReference>
<dbReference type="AGR" id="HGNC:33176"/>
<dbReference type="CTD" id="139067"/>
<dbReference type="GeneCards" id="SPANXN3"/>
<dbReference type="HGNC" id="HGNC:33176">
    <property type="gene designation" value="SPANXN3"/>
</dbReference>
<dbReference type="HPA" id="ENSG00000189252">
    <property type="expression patterns" value="Tissue enriched (testis)"/>
</dbReference>
<dbReference type="MIM" id="300666">
    <property type="type" value="gene"/>
</dbReference>
<dbReference type="neXtProt" id="NX_Q5MJ09"/>
<dbReference type="OpenTargets" id="ENSG00000189252"/>
<dbReference type="PharmGKB" id="PA162404385"/>
<dbReference type="VEuPathDB" id="HostDB:ENSG00000189252"/>
<dbReference type="eggNOG" id="ENOG502RXMW">
    <property type="taxonomic scope" value="Eukaryota"/>
</dbReference>
<dbReference type="GeneTree" id="ENSGT00940000163956"/>
<dbReference type="HOGENOM" id="CLU_140435_0_0_1"/>
<dbReference type="InParanoid" id="Q5MJ09"/>
<dbReference type="OMA" id="DEMQEVP"/>
<dbReference type="OrthoDB" id="9485135at2759"/>
<dbReference type="PAN-GO" id="Q5MJ09">
    <property type="GO annotations" value="0 GO annotations based on evolutionary models"/>
</dbReference>
<dbReference type="PhylomeDB" id="Q5MJ09"/>
<dbReference type="TreeFam" id="TF341404"/>
<dbReference type="PathwayCommons" id="Q5MJ09"/>
<dbReference type="SignaLink" id="Q5MJ09"/>
<dbReference type="BioGRID-ORCS" id="139067">
    <property type="hits" value="27 hits in 758 CRISPR screens"/>
</dbReference>
<dbReference type="GenomeRNAi" id="139067"/>
<dbReference type="Pharos" id="Q5MJ09">
    <property type="development level" value="Tdark"/>
</dbReference>
<dbReference type="PRO" id="PR:Q5MJ09"/>
<dbReference type="Proteomes" id="UP000005640">
    <property type="component" value="Chromosome X"/>
</dbReference>
<dbReference type="RNAct" id="Q5MJ09">
    <property type="molecule type" value="protein"/>
</dbReference>
<dbReference type="Bgee" id="ENSG00000189252">
    <property type="expression patterns" value="Expressed in male germ line stem cell (sensu Vertebrata) in testis and 27 other cell types or tissues"/>
</dbReference>
<dbReference type="InterPro" id="IPR010007">
    <property type="entry name" value="SPAN-X_fam"/>
</dbReference>
<dbReference type="Pfam" id="PF07458">
    <property type="entry name" value="SPAN-X"/>
    <property type="match status" value="1"/>
</dbReference>
<organism>
    <name type="scientific">Homo sapiens</name>
    <name type="common">Human</name>
    <dbReference type="NCBI Taxonomy" id="9606"/>
    <lineage>
        <taxon>Eukaryota</taxon>
        <taxon>Metazoa</taxon>
        <taxon>Chordata</taxon>
        <taxon>Craniata</taxon>
        <taxon>Vertebrata</taxon>
        <taxon>Euteleostomi</taxon>
        <taxon>Mammalia</taxon>
        <taxon>Eutheria</taxon>
        <taxon>Euarchontoglires</taxon>
        <taxon>Primates</taxon>
        <taxon>Haplorrhini</taxon>
        <taxon>Catarrhini</taxon>
        <taxon>Hominidae</taxon>
        <taxon>Homo</taxon>
    </lineage>
</organism>
<reference key="1">
    <citation type="journal article" date="2004" name="Proc. Natl. Acad. Sci. U.S.A.">
        <title>The SPANX gene family of cancer/testis-specific antigens: rapid evolution and amplification in African great apes and hominids.</title>
        <authorList>
            <person name="Kouprina N."/>
            <person name="Mullokandov M."/>
            <person name="Rogozin I.B."/>
            <person name="Collins N.K."/>
            <person name="Solomon G."/>
            <person name="Otstot J."/>
            <person name="Risinger J.I."/>
            <person name="Koonin E.V."/>
            <person name="Barrett J.C."/>
            <person name="Larionov V."/>
        </authorList>
    </citation>
    <scope>NUCLEOTIDE SEQUENCE [GENOMIC DNA]</scope>
    <scope>VARIANT LYS-43</scope>
</reference>
<reference key="2">
    <citation type="journal article" date="2005" name="Genome Res.">
        <title>Dynamic structure of the SPANX gene cluster mapped to the prostate cancer susceptibility locus HPCX at Xq27.</title>
        <authorList>
            <person name="Kouprina N."/>
            <person name="Pavlicek A."/>
            <person name="Noskov V.N."/>
            <person name="Solomon G."/>
            <person name="Otstot J."/>
            <person name="Isaacs W."/>
            <person name="Carpten J.D."/>
            <person name="Trent J.M."/>
            <person name="Schleutker J."/>
            <person name="Barrett J.C."/>
            <person name="Jurka J."/>
            <person name="Larionov V."/>
        </authorList>
    </citation>
    <scope>NUCLEOTIDE SEQUENCE [MRNA]</scope>
    <scope>VARIANT LYS-43</scope>
</reference>
<reference key="3">
    <citation type="journal article" date="2005" name="Nature">
        <title>The DNA sequence of the human X chromosome.</title>
        <authorList>
            <person name="Ross M.T."/>
            <person name="Grafham D.V."/>
            <person name="Coffey A.J."/>
            <person name="Scherer S."/>
            <person name="McLay K."/>
            <person name="Muzny D."/>
            <person name="Platzer M."/>
            <person name="Howell G.R."/>
            <person name="Burrows C."/>
            <person name="Bird C.P."/>
            <person name="Frankish A."/>
            <person name="Lovell F.L."/>
            <person name="Howe K.L."/>
            <person name="Ashurst J.L."/>
            <person name="Fulton R.S."/>
            <person name="Sudbrak R."/>
            <person name="Wen G."/>
            <person name="Jones M.C."/>
            <person name="Hurles M.E."/>
            <person name="Andrews T.D."/>
            <person name="Scott C.E."/>
            <person name="Searle S."/>
            <person name="Ramser J."/>
            <person name="Whittaker A."/>
            <person name="Deadman R."/>
            <person name="Carter N.P."/>
            <person name="Hunt S.E."/>
            <person name="Chen R."/>
            <person name="Cree A."/>
            <person name="Gunaratne P."/>
            <person name="Havlak P."/>
            <person name="Hodgson A."/>
            <person name="Metzker M.L."/>
            <person name="Richards S."/>
            <person name="Scott G."/>
            <person name="Steffen D."/>
            <person name="Sodergren E."/>
            <person name="Wheeler D.A."/>
            <person name="Worley K.C."/>
            <person name="Ainscough R."/>
            <person name="Ambrose K.D."/>
            <person name="Ansari-Lari M.A."/>
            <person name="Aradhya S."/>
            <person name="Ashwell R.I."/>
            <person name="Babbage A.K."/>
            <person name="Bagguley C.L."/>
            <person name="Ballabio A."/>
            <person name="Banerjee R."/>
            <person name="Barker G.E."/>
            <person name="Barlow K.F."/>
            <person name="Barrett I.P."/>
            <person name="Bates K.N."/>
            <person name="Beare D.M."/>
            <person name="Beasley H."/>
            <person name="Beasley O."/>
            <person name="Beck A."/>
            <person name="Bethel G."/>
            <person name="Blechschmidt K."/>
            <person name="Brady N."/>
            <person name="Bray-Allen S."/>
            <person name="Bridgeman A.M."/>
            <person name="Brown A.J."/>
            <person name="Brown M.J."/>
            <person name="Bonnin D."/>
            <person name="Bruford E.A."/>
            <person name="Buhay C."/>
            <person name="Burch P."/>
            <person name="Burford D."/>
            <person name="Burgess J."/>
            <person name="Burrill W."/>
            <person name="Burton J."/>
            <person name="Bye J.M."/>
            <person name="Carder C."/>
            <person name="Carrel L."/>
            <person name="Chako J."/>
            <person name="Chapman J.C."/>
            <person name="Chavez D."/>
            <person name="Chen E."/>
            <person name="Chen G."/>
            <person name="Chen Y."/>
            <person name="Chen Z."/>
            <person name="Chinault C."/>
            <person name="Ciccodicola A."/>
            <person name="Clark S.Y."/>
            <person name="Clarke G."/>
            <person name="Clee C.M."/>
            <person name="Clegg S."/>
            <person name="Clerc-Blankenburg K."/>
            <person name="Clifford K."/>
            <person name="Cobley V."/>
            <person name="Cole C.G."/>
            <person name="Conquer J.S."/>
            <person name="Corby N."/>
            <person name="Connor R.E."/>
            <person name="David R."/>
            <person name="Davies J."/>
            <person name="Davis C."/>
            <person name="Davis J."/>
            <person name="Delgado O."/>
            <person name="Deshazo D."/>
            <person name="Dhami P."/>
            <person name="Ding Y."/>
            <person name="Dinh H."/>
            <person name="Dodsworth S."/>
            <person name="Draper H."/>
            <person name="Dugan-Rocha S."/>
            <person name="Dunham A."/>
            <person name="Dunn M."/>
            <person name="Durbin K.J."/>
            <person name="Dutta I."/>
            <person name="Eades T."/>
            <person name="Ellwood M."/>
            <person name="Emery-Cohen A."/>
            <person name="Errington H."/>
            <person name="Evans K.L."/>
            <person name="Faulkner L."/>
            <person name="Francis F."/>
            <person name="Frankland J."/>
            <person name="Fraser A.E."/>
            <person name="Galgoczy P."/>
            <person name="Gilbert J."/>
            <person name="Gill R."/>
            <person name="Gloeckner G."/>
            <person name="Gregory S.G."/>
            <person name="Gribble S."/>
            <person name="Griffiths C."/>
            <person name="Grocock R."/>
            <person name="Gu Y."/>
            <person name="Gwilliam R."/>
            <person name="Hamilton C."/>
            <person name="Hart E.A."/>
            <person name="Hawes A."/>
            <person name="Heath P.D."/>
            <person name="Heitmann K."/>
            <person name="Hennig S."/>
            <person name="Hernandez J."/>
            <person name="Hinzmann B."/>
            <person name="Ho S."/>
            <person name="Hoffs M."/>
            <person name="Howden P.J."/>
            <person name="Huckle E.J."/>
            <person name="Hume J."/>
            <person name="Hunt P.J."/>
            <person name="Hunt A.R."/>
            <person name="Isherwood J."/>
            <person name="Jacob L."/>
            <person name="Johnson D."/>
            <person name="Jones S."/>
            <person name="de Jong P.J."/>
            <person name="Joseph S.S."/>
            <person name="Keenan S."/>
            <person name="Kelly S."/>
            <person name="Kershaw J.K."/>
            <person name="Khan Z."/>
            <person name="Kioschis P."/>
            <person name="Klages S."/>
            <person name="Knights A.J."/>
            <person name="Kosiura A."/>
            <person name="Kovar-Smith C."/>
            <person name="Laird G.K."/>
            <person name="Langford C."/>
            <person name="Lawlor S."/>
            <person name="Leversha M."/>
            <person name="Lewis L."/>
            <person name="Liu W."/>
            <person name="Lloyd C."/>
            <person name="Lloyd D.M."/>
            <person name="Loulseged H."/>
            <person name="Loveland J.E."/>
            <person name="Lovell J.D."/>
            <person name="Lozado R."/>
            <person name="Lu J."/>
            <person name="Lyne R."/>
            <person name="Ma J."/>
            <person name="Maheshwari M."/>
            <person name="Matthews L.H."/>
            <person name="McDowall J."/>
            <person name="McLaren S."/>
            <person name="McMurray A."/>
            <person name="Meidl P."/>
            <person name="Meitinger T."/>
            <person name="Milne S."/>
            <person name="Miner G."/>
            <person name="Mistry S.L."/>
            <person name="Morgan M."/>
            <person name="Morris S."/>
            <person name="Mueller I."/>
            <person name="Mullikin J.C."/>
            <person name="Nguyen N."/>
            <person name="Nordsiek G."/>
            <person name="Nyakatura G."/>
            <person name="O'dell C.N."/>
            <person name="Okwuonu G."/>
            <person name="Palmer S."/>
            <person name="Pandian R."/>
            <person name="Parker D."/>
            <person name="Parrish J."/>
            <person name="Pasternak S."/>
            <person name="Patel D."/>
            <person name="Pearce A.V."/>
            <person name="Pearson D.M."/>
            <person name="Pelan S.E."/>
            <person name="Perez L."/>
            <person name="Porter K.M."/>
            <person name="Ramsey Y."/>
            <person name="Reichwald K."/>
            <person name="Rhodes S."/>
            <person name="Ridler K.A."/>
            <person name="Schlessinger D."/>
            <person name="Schueler M.G."/>
            <person name="Sehra H.K."/>
            <person name="Shaw-Smith C."/>
            <person name="Shen H."/>
            <person name="Sheridan E.M."/>
            <person name="Shownkeen R."/>
            <person name="Skuce C.D."/>
            <person name="Smith M.L."/>
            <person name="Sotheran E.C."/>
            <person name="Steingruber H.E."/>
            <person name="Steward C.A."/>
            <person name="Storey R."/>
            <person name="Swann R.M."/>
            <person name="Swarbreck D."/>
            <person name="Tabor P.E."/>
            <person name="Taudien S."/>
            <person name="Taylor T."/>
            <person name="Teague B."/>
            <person name="Thomas K."/>
            <person name="Thorpe A."/>
            <person name="Timms K."/>
            <person name="Tracey A."/>
            <person name="Trevanion S."/>
            <person name="Tromans A.C."/>
            <person name="d'Urso M."/>
            <person name="Verduzco D."/>
            <person name="Villasana D."/>
            <person name="Waldron L."/>
            <person name="Wall M."/>
            <person name="Wang Q."/>
            <person name="Warren J."/>
            <person name="Warry G.L."/>
            <person name="Wei X."/>
            <person name="West A."/>
            <person name="Whitehead S.L."/>
            <person name="Whiteley M.N."/>
            <person name="Wilkinson J.E."/>
            <person name="Willey D.L."/>
            <person name="Williams G."/>
            <person name="Williams L."/>
            <person name="Williamson A."/>
            <person name="Williamson H."/>
            <person name="Wilming L."/>
            <person name="Woodmansey R.L."/>
            <person name="Wray P.W."/>
            <person name="Yen J."/>
            <person name="Zhang J."/>
            <person name="Zhou J."/>
            <person name="Zoghbi H."/>
            <person name="Zorilla S."/>
            <person name="Buck D."/>
            <person name="Reinhardt R."/>
            <person name="Poustka A."/>
            <person name="Rosenthal A."/>
            <person name="Lehrach H."/>
            <person name="Meindl A."/>
            <person name="Minx P.J."/>
            <person name="Hillier L.W."/>
            <person name="Willard H.F."/>
            <person name="Wilson R.K."/>
            <person name="Waterston R.H."/>
            <person name="Rice C.M."/>
            <person name="Vaudin M."/>
            <person name="Coulson A."/>
            <person name="Nelson D.L."/>
            <person name="Weinstock G."/>
            <person name="Sulston J.E."/>
            <person name="Durbin R.M."/>
            <person name="Hubbard T."/>
            <person name="Gibbs R.A."/>
            <person name="Beck S."/>
            <person name="Rogers J."/>
            <person name="Bentley D.R."/>
        </authorList>
    </citation>
    <scope>NUCLEOTIDE SEQUENCE [LARGE SCALE GENOMIC DNA]</scope>
</reference>
<reference key="4">
    <citation type="journal article" date="2004" name="Genome Res.">
        <title>The status, quality, and expansion of the NIH full-length cDNA project: the Mammalian Gene Collection (MGC).</title>
        <authorList>
            <consortium name="The MGC Project Team"/>
        </authorList>
    </citation>
    <scope>NUCLEOTIDE SEQUENCE [LARGE SCALE MRNA]</scope>
    <scope>VARIANT LYS-43</scope>
    <source>
        <tissue>Testis</tissue>
    </source>
</reference>
<comment type="interaction">
    <interactant intactId="EBI-12037215">
        <id>Q5MJ09</id>
    </interactant>
    <interactant intactId="EBI-9357295">
        <id>Q9BTE6-2</id>
        <label>AARSD1</label>
    </interactant>
    <organismsDiffer>false</organismsDiffer>
    <experiments>3</experiments>
</comment>
<comment type="interaction">
    <interactant intactId="EBI-12037215">
        <id>Q5MJ09</id>
    </interactant>
    <interactant intactId="EBI-10270867">
        <id>Q8NEY4-2</id>
        <label>ATP6V1C2</label>
    </interactant>
    <organismsDiffer>false</organismsDiffer>
    <experiments>3</experiments>
</comment>
<comment type="interaction">
    <interactant intactId="EBI-12037215">
        <id>Q5MJ09</id>
    </interactant>
    <interactant intactId="EBI-2559016">
        <id>Q6NZI2</id>
        <label>CAVIN1</label>
    </interactant>
    <organismsDiffer>false</organismsDiffer>
    <experiments>3</experiments>
</comment>
<comment type="interaction">
    <interactant intactId="EBI-12037215">
        <id>Q5MJ09</id>
    </interactant>
    <interactant intactId="EBI-739624">
        <id>Q8NHQ1</id>
        <label>CEP70</label>
    </interactant>
    <organismsDiffer>false</organismsDiffer>
    <experiments>3</experiments>
</comment>
<comment type="interaction">
    <interactant intactId="EBI-12037215">
        <id>Q5MJ09</id>
    </interactant>
    <interactant intactId="EBI-19153639">
        <id>Q9NTX9</id>
        <label>FAM217B</label>
    </interactant>
    <organismsDiffer>false</organismsDiffer>
    <experiments>3</experiments>
</comment>
<comment type="interaction">
    <interactant intactId="EBI-12037215">
        <id>Q5MJ09</id>
    </interactant>
    <interactant intactId="EBI-12958227">
        <id>Q86W67</id>
        <label>FAM228A</label>
    </interactant>
    <organismsDiffer>false</organismsDiffer>
    <experiments>3</experiments>
</comment>
<comment type="interaction">
    <interactant intactId="EBI-12037215">
        <id>Q5MJ09</id>
    </interactant>
    <interactant intactId="EBI-13086076">
        <id>P61296-2</id>
        <label>HAND2</label>
    </interactant>
    <organismsDiffer>false</organismsDiffer>
    <experiments>3</experiments>
</comment>
<comment type="interaction">
    <interactant intactId="EBI-12037215">
        <id>Q5MJ09</id>
    </interactant>
    <interactant intactId="EBI-16439278">
        <id>Q6FHY5</id>
        <label>MEOX2</label>
    </interactant>
    <organismsDiffer>false</organismsDiffer>
    <experiments>3</experiments>
</comment>
<comment type="interaction">
    <interactant intactId="EBI-12037215">
        <id>Q5MJ09</id>
    </interactant>
    <interactant intactId="EBI-10302990">
        <id>Q9BYU1</id>
        <label>PBX4</label>
    </interactant>
    <organismsDiffer>false</organismsDiffer>
    <experiments>3</experiments>
</comment>
<comment type="interaction">
    <interactant intactId="EBI-12037215">
        <id>Q5MJ09</id>
    </interactant>
    <interactant intactId="EBI-727004">
        <id>O00560</id>
        <label>SDCBP</label>
    </interactant>
    <organismsDiffer>false</organismsDiffer>
    <experiments>3</experiments>
</comment>
<comment type="interaction">
    <interactant intactId="EBI-12037215">
        <id>Q5MJ09</id>
    </interactant>
    <interactant intactId="EBI-10198587">
        <id>Q02446</id>
        <label>SP4</label>
    </interactant>
    <organismsDiffer>false</organismsDiffer>
    <experiments>3</experiments>
</comment>
<comment type="interaction">
    <interactant intactId="EBI-12037215">
        <id>Q5MJ09</id>
    </interactant>
    <interactant intactId="EBI-745680">
        <id>Q96MF2</id>
        <label>STAC3</label>
    </interactant>
    <organismsDiffer>false</organismsDiffer>
    <experiments>3</experiments>
</comment>
<comment type="interaction">
    <interactant intactId="EBI-12037215">
        <id>Q5MJ09</id>
    </interactant>
    <interactant intactId="EBI-12111538">
        <id>Q8IY57-5</id>
        <label>YAF2</label>
    </interactant>
    <organismsDiffer>false</organismsDiffer>
    <experiments>3</experiments>
</comment>
<comment type="interaction">
    <interactant intactId="EBI-12037215">
        <id>Q5MJ09</id>
    </interactant>
    <interactant intactId="EBI-2849334">
        <id>P52747</id>
        <label>ZNF143</label>
    </interactant>
    <organismsDiffer>false</organismsDiffer>
    <experiments>3</experiments>
</comment>
<comment type="interaction">
    <interactant intactId="EBI-12037215">
        <id>Q5MJ09</id>
    </interactant>
    <interactant intactId="EBI-7254550">
        <id>P36508</id>
        <label>ZNF76</label>
    </interactant>
    <organismsDiffer>false</organismsDiffer>
    <experiments>3</experiments>
</comment>
<comment type="similarity">
    <text evidence="5">Belongs to the SPAN-X family.</text>
</comment>